<accession>Q5PIV1</accession>
<name>RS10_SALPA</name>
<feature type="chain" id="PRO_0000237092" description="Small ribosomal subunit protein uS10">
    <location>
        <begin position="1"/>
        <end position="103"/>
    </location>
</feature>
<gene>
    <name evidence="1" type="primary">rpsJ</name>
    <name type="ordered locus">SPA3307</name>
</gene>
<dbReference type="EMBL" id="CP000026">
    <property type="protein sequence ID" value="AAV79123.1"/>
    <property type="molecule type" value="Genomic_DNA"/>
</dbReference>
<dbReference type="RefSeq" id="WP_001181005.1">
    <property type="nucleotide sequence ID" value="NC_006511.1"/>
</dbReference>
<dbReference type="SMR" id="Q5PIV1"/>
<dbReference type="GeneID" id="98390443"/>
<dbReference type="KEGG" id="spt:SPA3307"/>
<dbReference type="HOGENOM" id="CLU_122625_1_3_6"/>
<dbReference type="Proteomes" id="UP000008185">
    <property type="component" value="Chromosome"/>
</dbReference>
<dbReference type="GO" id="GO:1990904">
    <property type="term" value="C:ribonucleoprotein complex"/>
    <property type="evidence" value="ECO:0007669"/>
    <property type="project" value="UniProtKB-KW"/>
</dbReference>
<dbReference type="GO" id="GO:0005840">
    <property type="term" value="C:ribosome"/>
    <property type="evidence" value="ECO:0007669"/>
    <property type="project" value="UniProtKB-KW"/>
</dbReference>
<dbReference type="GO" id="GO:0003735">
    <property type="term" value="F:structural constituent of ribosome"/>
    <property type="evidence" value="ECO:0007669"/>
    <property type="project" value="InterPro"/>
</dbReference>
<dbReference type="GO" id="GO:0000049">
    <property type="term" value="F:tRNA binding"/>
    <property type="evidence" value="ECO:0007669"/>
    <property type="project" value="UniProtKB-UniRule"/>
</dbReference>
<dbReference type="GO" id="GO:0006412">
    <property type="term" value="P:translation"/>
    <property type="evidence" value="ECO:0007669"/>
    <property type="project" value="UniProtKB-UniRule"/>
</dbReference>
<dbReference type="FunFam" id="3.30.70.600:FF:000001">
    <property type="entry name" value="30S ribosomal protein S10"/>
    <property type="match status" value="1"/>
</dbReference>
<dbReference type="Gene3D" id="3.30.70.600">
    <property type="entry name" value="Ribosomal protein S10 domain"/>
    <property type="match status" value="1"/>
</dbReference>
<dbReference type="HAMAP" id="MF_00508">
    <property type="entry name" value="Ribosomal_uS10"/>
    <property type="match status" value="1"/>
</dbReference>
<dbReference type="InterPro" id="IPR001848">
    <property type="entry name" value="Ribosomal_uS10"/>
</dbReference>
<dbReference type="InterPro" id="IPR018268">
    <property type="entry name" value="Ribosomal_uS10_CS"/>
</dbReference>
<dbReference type="InterPro" id="IPR027486">
    <property type="entry name" value="Ribosomal_uS10_dom"/>
</dbReference>
<dbReference type="InterPro" id="IPR036838">
    <property type="entry name" value="Ribosomal_uS10_dom_sf"/>
</dbReference>
<dbReference type="NCBIfam" id="NF001861">
    <property type="entry name" value="PRK00596.1"/>
    <property type="match status" value="1"/>
</dbReference>
<dbReference type="NCBIfam" id="TIGR01049">
    <property type="entry name" value="rpsJ_bact"/>
    <property type="match status" value="1"/>
</dbReference>
<dbReference type="PANTHER" id="PTHR11700">
    <property type="entry name" value="30S RIBOSOMAL PROTEIN S10 FAMILY MEMBER"/>
    <property type="match status" value="1"/>
</dbReference>
<dbReference type="Pfam" id="PF00338">
    <property type="entry name" value="Ribosomal_S10"/>
    <property type="match status" value="1"/>
</dbReference>
<dbReference type="PRINTS" id="PR00971">
    <property type="entry name" value="RIBOSOMALS10"/>
</dbReference>
<dbReference type="SMART" id="SM01403">
    <property type="entry name" value="Ribosomal_S10"/>
    <property type="match status" value="1"/>
</dbReference>
<dbReference type="SUPFAM" id="SSF54999">
    <property type="entry name" value="Ribosomal protein S10"/>
    <property type="match status" value="1"/>
</dbReference>
<dbReference type="PROSITE" id="PS00361">
    <property type="entry name" value="RIBOSOMAL_S10"/>
    <property type="match status" value="1"/>
</dbReference>
<reference key="1">
    <citation type="journal article" date="2004" name="Nat. Genet.">
        <title>Comparison of genome degradation in Paratyphi A and Typhi, human-restricted serovars of Salmonella enterica that cause typhoid.</title>
        <authorList>
            <person name="McClelland M."/>
            <person name="Sanderson K.E."/>
            <person name="Clifton S.W."/>
            <person name="Latreille P."/>
            <person name="Porwollik S."/>
            <person name="Sabo A."/>
            <person name="Meyer R."/>
            <person name="Bieri T."/>
            <person name="Ozersky P."/>
            <person name="McLellan M."/>
            <person name="Harkins C.R."/>
            <person name="Wang C."/>
            <person name="Nguyen C."/>
            <person name="Berghoff A."/>
            <person name="Elliott G."/>
            <person name="Kohlberg S."/>
            <person name="Strong C."/>
            <person name="Du F."/>
            <person name="Carter J."/>
            <person name="Kremizki C."/>
            <person name="Layman D."/>
            <person name="Leonard S."/>
            <person name="Sun H."/>
            <person name="Fulton L."/>
            <person name="Nash W."/>
            <person name="Miner T."/>
            <person name="Minx P."/>
            <person name="Delehaunty K."/>
            <person name="Fronick C."/>
            <person name="Magrini V."/>
            <person name="Nhan M."/>
            <person name="Warren W."/>
            <person name="Florea L."/>
            <person name="Spieth J."/>
            <person name="Wilson R.K."/>
        </authorList>
    </citation>
    <scope>NUCLEOTIDE SEQUENCE [LARGE SCALE GENOMIC DNA]</scope>
    <source>
        <strain>ATCC 9150 / SARB42</strain>
    </source>
</reference>
<protein>
    <recommendedName>
        <fullName evidence="1">Small ribosomal subunit protein uS10</fullName>
    </recommendedName>
    <alternativeName>
        <fullName evidence="2">30S ribosomal protein S10</fullName>
    </alternativeName>
</protein>
<organism>
    <name type="scientific">Salmonella paratyphi A (strain ATCC 9150 / SARB42)</name>
    <dbReference type="NCBI Taxonomy" id="295319"/>
    <lineage>
        <taxon>Bacteria</taxon>
        <taxon>Pseudomonadati</taxon>
        <taxon>Pseudomonadota</taxon>
        <taxon>Gammaproteobacteria</taxon>
        <taxon>Enterobacterales</taxon>
        <taxon>Enterobacteriaceae</taxon>
        <taxon>Salmonella</taxon>
    </lineage>
</organism>
<evidence type="ECO:0000255" key="1">
    <source>
        <dbReference type="HAMAP-Rule" id="MF_00508"/>
    </source>
</evidence>
<evidence type="ECO:0000305" key="2"/>
<proteinExistence type="inferred from homology"/>
<keyword id="KW-0687">Ribonucleoprotein</keyword>
<keyword id="KW-0689">Ribosomal protein</keyword>
<comment type="function">
    <text evidence="1">Involved in the binding of tRNA to the ribosomes.</text>
</comment>
<comment type="subunit">
    <text evidence="1">Part of the 30S ribosomal subunit.</text>
</comment>
<comment type="similarity">
    <text evidence="1">Belongs to the universal ribosomal protein uS10 family.</text>
</comment>
<sequence>MQNQRIRIRLKAFDHRLIDQSTAEIVETAKRTGAQVRGPIPLPTRKERFTVLISPHVNKDARDQYEIRTHKRLVDIVEPTEKTVDALMRLDLAAGVDVQISLG</sequence>